<keyword id="KW-0093">Biotin biosynthesis</keyword>
<keyword id="KW-0663">Pyridoxal phosphate</keyword>
<keyword id="KW-1185">Reference proteome</keyword>
<keyword id="KW-0808">Transferase</keyword>
<evidence type="ECO:0000250" key="1"/>
<evidence type="ECO:0000305" key="2"/>
<feature type="chain" id="PRO_0000380964" description="Putative 8-amino-7-oxononanoate synthase">
    <location>
        <begin position="1"/>
        <end position="384"/>
    </location>
</feature>
<feature type="binding site" evidence="1">
    <location>
        <position position="19"/>
    </location>
    <ligand>
        <name>substrate</name>
    </ligand>
</feature>
<feature type="binding site" evidence="1">
    <location>
        <begin position="106"/>
        <end position="107"/>
    </location>
    <ligand>
        <name>pyridoxal 5'-phosphate</name>
        <dbReference type="ChEBI" id="CHEBI:597326"/>
    </ligand>
</feature>
<feature type="binding site" evidence="1">
    <location>
        <position position="131"/>
    </location>
    <ligand>
        <name>substrate</name>
    </ligand>
</feature>
<feature type="binding site" evidence="1">
    <location>
        <position position="177"/>
    </location>
    <ligand>
        <name>pyridoxal 5'-phosphate</name>
        <dbReference type="ChEBI" id="CHEBI:597326"/>
    </ligand>
</feature>
<feature type="binding site" evidence="1">
    <location>
        <begin position="202"/>
        <end position="205"/>
    </location>
    <ligand>
        <name>pyridoxal 5'-phosphate</name>
        <dbReference type="ChEBI" id="CHEBI:597326"/>
    </ligand>
</feature>
<feature type="binding site" evidence="1">
    <location>
        <begin position="233"/>
        <end position="236"/>
    </location>
    <ligand>
        <name>pyridoxal 5'-phosphate</name>
        <dbReference type="ChEBI" id="CHEBI:597326"/>
    </ligand>
</feature>
<feature type="modified residue" description="N6-(pyridoxal phosphate)lysine" evidence="1">
    <location>
        <position position="236"/>
    </location>
</feature>
<proteinExistence type="inferred from homology"/>
<dbReference type="EC" id="2.3.1.47"/>
<dbReference type="EMBL" id="CP000860">
    <property type="protein sequence ID" value="ACA59836.1"/>
    <property type="molecule type" value="Genomic_DNA"/>
</dbReference>
<dbReference type="RefSeq" id="WP_012302421.1">
    <property type="nucleotide sequence ID" value="NC_010424.1"/>
</dbReference>
<dbReference type="SMR" id="B1I4F9"/>
<dbReference type="STRING" id="477974.Daud_1326"/>
<dbReference type="KEGG" id="dau:Daud_1326"/>
<dbReference type="eggNOG" id="COG0156">
    <property type="taxonomic scope" value="Bacteria"/>
</dbReference>
<dbReference type="HOGENOM" id="CLU_015846_11_0_9"/>
<dbReference type="OrthoDB" id="9807157at2"/>
<dbReference type="UniPathway" id="UPA00078"/>
<dbReference type="Proteomes" id="UP000008544">
    <property type="component" value="Chromosome"/>
</dbReference>
<dbReference type="GO" id="GO:0008710">
    <property type="term" value="F:8-amino-7-oxononanoate synthase activity"/>
    <property type="evidence" value="ECO:0007669"/>
    <property type="project" value="UniProtKB-EC"/>
</dbReference>
<dbReference type="GO" id="GO:0030170">
    <property type="term" value="F:pyridoxal phosphate binding"/>
    <property type="evidence" value="ECO:0007669"/>
    <property type="project" value="InterPro"/>
</dbReference>
<dbReference type="GO" id="GO:0009102">
    <property type="term" value="P:biotin biosynthetic process"/>
    <property type="evidence" value="ECO:0007669"/>
    <property type="project" value="UniProtKB-UniPathway"/>
</dbReference>
<dbReference type="CDD" id="cd06454">
    <property type="entry name" value="KBL_like"/>
    <property type="match status" value="1"/>
</dbReference>
<dbReference type="Gene3D" id="3.90.1150.10">
    <property type="entry name" value="Aspartate Aminotransferase, domain 1"/>
    <property type="match status" value="1"/>
</dbReference>
<dbReference type="Gene3D" id="3.40.640.10">
    <property type="entry name" value="Type I PLP-dependent aspartate aminotransferase-like (Major domain)"/>
    <property type="match status" value="1"/>
</dbReference>
<dbReference type="InterPro" id="IPR001917">
    <property type="entry name" value="Aminotrans_II_pyridoxalP_BS"/>
</dbReference>
<dbReference type="InterPro" id="IPR004839">
    <property type="entry name" value="Aminotransferase_I/II_large"/>
</dbReference>
<dbReference type="InterPro" id="IPR050087">
    <property type="entry name" value="AON_synthase_class-II"/>
</dbReference>
<dbReference type="InterPro" id="IPR004723">
    <property type="entry name" value="AONS_Archaea/Proteobacteria"/>
</dbReference>
<dbReference type="InterPro" id="IPR015424">
    <property type="entry name" value="PyrdxlP-dep_Trfase"/>
</dbReference>
<dbReference type="InterPro" id="IPR015421">
    <property type="entry name" value="PyrdxlP-dep_Trfase_major"/>
</dbReference>
<dbReference type="InterPro" id="IPR015422">
    <property type="entry name" value="PyrdxlP-dep_Trfase_small"/>
</dbReference>
<dbReference type="NCBIfam" id="TIGR00858">
    <property type="entry name" value="bioF"/>
    <property type="match status" value="1"/>
</dbReference>
<dbReference type="PANTHER" id="PTHR13693:SF100">
    <property type="entry name" value="8-AMINO-7-OXONONANOATE SYNTHASE"/>
    <property type="match status" value="1"/>
</dbReference>
<dbReference type="PANTHER" id="PTHR13693">
    <property type="entry name" value="CLASS II AMINOTRANSFERASE/8-AMINO-7-OXONONANOATE SYNTHASE"/>
    <property type="match status" value="1"/>
</dbReference>
<dbReference type="Pfam" id="PF00155">
    <property type="entry name" value="Aminotran_1_2"/>
    <property type="match status" value="1"/>
</dbReference>
<dbReference type="SUPFAM" id="SSF53383">
    <property type="entry name" value="PLP-dependent transferases"/>
    <property type="match status" value="1"/>
</dbReference>
<dbReference type="PROSITE" id="PS00599">
    <property type="entry name" value="AA_TRANSFER_CLASS_2"/>
    <property type="match status" value="1"/>
</dbReference>
<gene>
    <name type="primary">bioF</name>
    <name type="ordered locus">Daud_1326</name>
</gene>
<organism>
    <name type="scientific">Desulforudis audaxviator (strain MP104C)</name>
    <dbReference type="NCBI Taxonomy" id="477974"/>
    <lineage>
        <taxon>Bacteria</taxon>
        <taxon>Bacillati</taxon>
        <taxon>Bacillota</taxon>
        <taxon>Clostridia</taxon>
        <taxon>Thermoanaerobacterales</taxon>
        <taxon>Candidatus Desulforudaceae</taxon>
        <taxon>Candidatus Desulforudis</taxon>
    </lineage>
</organism>
<protein>
    <recommendedName>
        <fullName>Putative 8-amino-7-oxononanoate synthase</fullName>
        <shortName>AONS</shortName>
        <ecNumber>2.3.1.47</ecNumber>
    </recommendedName>
    <alternativeName>
        <fullName>7-keto-8-amino-pelargonic acid synthase</fullName>
        <shortName>7-KAP synthase</shortName>
    </alternativeName>
    <alternativeName>
        <fullName>8-amino-7-ketopelargonate synthase</fullName>
    </alternativeName>
</protein>
<reference key="1">
    <citation type="submission" date="2007-10" db="EMBL/GenBank/DDBJ databases">
        <title>Complete sequence of chromosome of Desulforudis audaxviator MP104C.</title>
        <authorList>
            <person name="Copeland A."/>
            <person name="Lucas S."/>
            <person name="Lapidus A."/>
            <person name="Barry K."/>
            <person name="Glavina del Rio T."/>
            <person name="Dalin E."/>
            <person name="Tice H."/>
            <person name="Bruce D."/>
            <person name="Pitluck S."/>
            <person name="Lowry S.R."/>
            <person name="Larimer F."/>
            <person name="Land M.L."/>
            <person name="Hauser L."/>
            <person name="Kyrpides N."/>
            <person name="Ivanova N.N."/>
            <person name="Richardson P."/>
        </authorList>
    </citation>
    <scope>NUCLEOTIDE SEQUENCE [LARGE SCALE GENOMIC DNA]</scope>
    <source>
        <strain>MP104C</strain>
    </source>
</reference>
<sequence>MREFLEETLQKIEAAGLRRSLRPLEPLGPTRALFNGREVTLFCTNNYLGLTHHPRVTARAQEALRKYGTGSGAARLVSGHNPLLQALEEALARCKGSPRALVFPTGYTANLAVIGTLAGREDVIFCDRLCHASLLDGCLLSGAKLVRFSHNDADSLRRLLNQHTGRRRFIVTEGLFSMDGDIPPLPEFYTLAQEFEAILIVDDAHGTGVLGPNGRGTVADAGIPAERIVISGTLSKALASLGGFVTGPGLLSEFLLNRARSFIFTTALPPVSAAAALAALEVLEAEPAILEGLWENVMRFRQGLNARGLPASGNSPIIPLILGSPERALRAAENLLEQGYYVPAIRPPAVPPGTARLRITVSAAHTPAEIDGFLNALGKALEEA</sequence>
<comment type="function">
    <text evidence="1">Catalyzes the decarboxylative condensation of pimeloyl-[acyl-carrier protein] and L-alanine to produce 8-amino-7-oxononanoate (AON), [acyl-carrier protein], and carbon dioxide.</text>
</comment>
<comment type="catalytic activity">
    <reaction>
        <text>6-carboxyhexanoyl-[ACP] + L-alanine + H(+) = (8S)-8-amino-7-oxononanoate + holo-[ACP] + CO2</text>
        <dbReference type="Rhea" id="RHEA:42288"/>
        <dbReference type="Rhea" id="RHEA-COMP:9685"/>
        <dbReference type="Rhea" id="RHEA-COMP:9955"/>
        <dbReference type="ChEBI" id="CHEBI:15378"/>
        <dbReference type="ChEBI" id="CHEBI:16526"/>
        <dbReference type="ChEBI" id="CHEBI:57972"/>
        <dbReference type="ChEBI" id="CHEBI:64479"/>
        <dbReference type="ChEBI" id="CHEBI:78846"/>
        <dbReference type="ChEBI" id="CHEBI:149468"/>
        <dbReference type="EC" id="2.3.1.47"/>
    </reaction>
</comment>
<comment type="cofactor">
    <cofactor evidence="1">
        <name>pyridoxal 5'-phosphate</name>
        <dbReference type="ChEBI" id="CHEBI:597326"/>
    </cofactor>
</comment>
<comment type="pathway">
    <text>Cofactor biosynthesis; biotin biosynthesis.</text>
</comment>
<comment type="subunit">
    <text evidence="1">Homodimer.</text>
</comment>
<comment type="similarity">
    <text evidence="2">Belongs to the class-II pyridoxal-phosphate-dependent aminotransferase family. BioF subfamily.</text>
</comment>
<accession>B1I4F9</accession>
<name>BIOF_DESAP</name>